<sequence length="249" mass="27536">MFKIVYPNAKDFFSFINSITNVTDSIILNFTEDGIFSRHLTEDKVLMAIMRIPKDVLSEYSIDSPTSVKLDVSSVKKILSKASSKKATIELTETDSGLKIIIRDEKSGAKSTIYIKAEKGQVEQLTEPKVNLAVNFTTDESVLNVIAADVTLVGEEMRISTEEDKIKIEAGEEGKRYVAFLMKDKPLKELSIDTSASSSYSAEMFKDAVKGLRGFSAPTMVSFGENLPMKIDVEAVSGGHMIFWIAPRL</sequence>
<feature type="chain" id="PRO_0000149215" description="DNA polymerase sliding clamp 1">
    <location>
        <begin position="1"/>
        <end position="249"/>
    </location>
</feature>
<feature type="mutagenesis site" description="Loss of interaction with PCNA3, no change with PCNA2." evidence="4">
    <original>YIK</original>
    <variation>ELE</variation>
    <location>
        <begin position="114"/>
        <end position="116"/>
    </location>
</feature>
<feature type="mutagenesis site" description="Loss of interaction with both PCNA3 and PCNA2." evidence="4">
    <original>KRY</original>
    <variation>EED</variation>
    <location>
        <begin position="175"/>
        <end position="177"/>
    </location>
</feature>
<feature type="strand" evidence="11">
    <location>
        <begin position="3"/>
        <end position="7"/>
    </location>
</feature>
<feature type="helix" evidence="11">
    <location>
        <begin position="9"/>
        <end position="19"/>
    </location>
</feature>
<feature type="turn" evidence="11">
    <location>
        <begin position="20"/>
        <end position="22"/>
    </location>
</feature>
<feature type="strand" evidence="11">
    <location>
        <begin position="24"/>
        <end position="30"/>
    </location>
</feature>
<feature type="strand" evidence="11">
    <location>
        <begin position="32"/>
        <end position="40"/>
    </location>
</feature>
<feature type="strand" evidence="11">
    <location>
        <begin position="44"/>
        <end position="53"/>
    </location>
</feature>
<feature type="helix" evidence="11">
    <location>
        <begin position="54"/>
        <end position="56"/>
    </location>
</feature>
<feature type="strand" evidence="11">
    <location>
        <begin position="57"/>
        <end position="61"/>
    </location>
</feature>
<feature type="strand" evidence="11">
    <location>
        <begin position="66"/>
        <end position="70"/>
    </location>
</feature>
<feature type="helix" evidence="11">
    <location>
        <begin position="72"/>
        <end position="79"/>
    </location>
</feature>
<feature type="strand" evidence="11">
    <location>
        <begin position="87"/>
        <end position="93"/>
    </location>
</feature>
<feature type="strand" evidence="11">
    <location>
        <begin position="95"/>
        <end position="104"/>
    </location>
</feature>
<feature type="turn" evidence="11">
    <location>
        <begin position="105"/>
        <end position="107"/>
    </location>
</feature>
<feature type="strand" evidence="11">
    <location>
        <begin position="110"/>
        <end position="116"/>
    </location>
</feature>
<feature type="strand" evidence="10">
    <location>
        <begin position="118"/>
        <end position="120"/>
    </location>
</feature>
<feature type="strand" evidence="11">
    <location>
        <begin position="134"/>
        <end position="138"/>
    </location>
</feature>
<feature type="helix" evidence="11">
    <location>
        <begin position="140"/>
        <end position="153"/>
    </location>
</feature>
<feature type="strand" evidence="11">
    <location>
        <begin position="155"/>
        <end position="162"/>
    </location>
</feature>
<feature type="strand" evidence="11">
    <location>
        <begin position="165"/>
        <end position="172"/>
    </location>
</feature>
<feature type="strand" evidence="11">
    <location>
        <begin position="175"/>
        <end position="183"/>
    </location>
</feature>
<feature type="strand" evidence="11">
    <location>
        <begin position="185"/>
        <end position="194"/>
    </location>
</feature>
<feature type="strand" evidence="11">
    <location>
        <begin position="197"/>
        <end position="201"/>
    </location>
</feature>
<feature type="helix" evidence="11">
    <location>
        <begin position="202"/>
        <end position="210"/>
    </location>
</feature>
<feature type="turn" evidence="11">
    <location>
        <begin position="211"/>
        <end position="214"/>
    </location>
</feature>
<feature type="strand" evidence="11">
    <location>
        <begin position="219"/>
        <end position="223"/>
    </location>
</feature>
<feature type="strand" evidence="11">
    <location>
        <begin position="229"/>
        <end position="234"/>
    </location>
</feature>
<feature type="strand" evidence="11">
    <location>
        <begin position="240"/>
        <end position="245"/>
    </location>
</feature>
<evidence type="ECO:0000255" key="1">
    <source>
        <dbReference type="HAMAP-Rule" id="MF_00317"/>
    </source>
</evidence>
<evidence type="ECO:0000269" key="2">
    <source>
    </source>
</evidence>
<evidence type="ECO:0000269" key="3">
    <source>
    </source>
</evidence>
<evidence type="ECO:0000269" key="4">
    <source>
    </source>
</evidence>
<evidence type="ECO:0000269" key="5">
    <source>
    </source>
</evidence>
<evidence type="ECO:0000269" key="6">
    <source>
    </source>
</evidence>
<evidence type="ECO:0000269" key="7">
    <source>
    </source>
</evidence>
<evidence type="ECO:0000269" key="8">
    <source>
    </source>
</evidence>
<evidence type="ECO:0000269" key="9">
    <source>
    </source>
</evidence>
<evidence type="ECO:0007829" key="10">
    <source>
        <dbReference type="PDB" id="2NTI"/>
    </source>
</evidence>
<evidence type="ECO:0007829" key="11">
    <source>
        <dbReference type="PDB" id="3FDS"/>
    </source>
</evidence>
<accession>P57766</accession>
<gene>
    <name evidence="1" type="primary">pcn1</name>
    <name type="synonym">pcnA-like</name>
    <name type="ordered locus">SSO0397</name>
    <name type="ORF">C41_008</name>
</gene>
<dbReference type="EMBL" id="AE006641">
    <property type="protein sequence ID" value="AAK40726.1"/>
    <property type="molecule type" value="Genomic_DNA"/>
</dbReference>
<dbReference type="PIR" id="G90183">
    <property type="entry name" value="G90183"/>
</dbReference>
<dbReference type="RefSeq" id="WP_009988793.1">
    <property type="nucleotide sequence ID" value="NC_002754.1"/>
</dbReference>
<dbReference type="PDB" id="2HII">
    <property type="method" value="X-ray"/>
    <property type="resolution" value="2.79 A"/>
    <property type="chains" value="A/X=1-249"/>
</dbReference>
<dbReference type="PDB" id="2HIK">
    <property type="method" value="X-ray"/>
    <property type="resolution" value="3.30 A"/>
    <property type="chains" value="A/L/X=1-249"/>
</dbReference>
<dbReference type="PDB" id="2IO4">
    <property type="method" value="X-ray"/>
    <property type="resolution" value="2.60 A"/>
    <property type="chains" value="A/C=1-249"/>
</dbReference>
<dbReference type="PDB" id="2IX2">
    <property type="method" value="X-ray"/>
    <property type="resolution" value="2.20 A"/>
    <property type="chains" value="A=1-249"/>
</dbReference>
<dbReference type="PDB" id="2IZO">
    <property type="method" value="X-ray"/>
    <property type="resolution" value="2.90 A"/>
    <property type="chains" value="C=1-249"/>
</dbReference>
<dbReference type="PDB" id="2NTI">
    <property type="method" value="X-ray"/>
    <property type="resolution" value="2.50 A"/>
    <property type="chains" value="A/D/G=1-249"/>
</dbReference>
<dbReference type="PDB" id="3FDS">
    <property type="method" value="X-ray"/>
    <property type="resolution" value="2.05 A"/>
    <property type="chains" value="C=1-249"/>
</dbReference>
<dbReference type="PDB" id="7RPO">
    <property type="method" value="EM"/>
    <property type="resolution" value="4.16 A"/>
    <property type="chains" value="A=2-249"/>
</dbReference>
<dbReference type="PDB" id="7RPW">
    <property type="method" value="EM"/>
    <property type="resolution" value="4.38 A"/>
    <property type="chains" value="A=2-249"/>
</dbReference>
<dbReference type="PDB" id="7RPX">
    <property type="method" value="EM"/>
    <property type="resolution" value="4.20 A"/>
    <property type="chains" value="A=2-249"/>
</dbReference>
<dbReference type="PDBsum" id="2HII"/>
<dbReference type="PDBsum" id="2HIK"/>
<dbReference type="PDBsum" id="2IO4"/>
<dbReference type="PDBsum" id="2IX2"/>
<dbReference type="PDBsum" id="2IZO"/>
<dbReference type="PDBsum" id="2NTI"/>
<dbReference type="PDBsum" id="3FDS"/>
<dbReference type="PDBsum" id="7RPO"/>
<dbReference type="PDBsum" id="7RPW"/>
<dbReference type="PDBsum" id="7RPX"/>
<dbReference type="EMDB" id="EMD-24618"/>
<dbReference type="EMDB" id="EMD-24624"/>
<dbReference type="EMDB" id="EMD-24625"/>
<dbReference type="SMR" id="P57766"/>
<dbReference type="DIP" id="DIP-48854N"/>
<dbReference type="FunCoup" id="P57766">
    <property type="interactions" value="1"/>
</dbReference>
<dbReference type="IntAct" id="P57766">
    <property type="interactions" value="1"/>
</dbReference>
<dbReference type="STRING" id="273057.SSO0397"/>
<dbReference type="PaxDb" id="273057-SSO0397"/>
<dbReference type="EnsemblBacteria" id="AAK40726">
    <property type="protein sequence ID" value="AAK40726"/>
    <property type="gene ID" value="SSO0397"/>
</dbReference>
<dbReference type="KEGG" id="sso:SSO0397"/>
<dbReference type="PATRIC" id="fig|273057.12.peg.393"/>
<dbReference type="eggNOG" id="arCOG00488">
    <property type="taxonomic scope" value="Archaea"/>
</dbReference>
<dbReference type="HOGENOM" id="CLU_043978_1_0_2"/>
<dbReference type="InParanoid" id="P57766"/>
<dbReference type="PhylomeDB" id="P57766"/>
<dbReference type="EvolutionaryTrace" id="P57766"/>
<dbReference type="Proteomes" id="UP000001974">
    <property type="component" value="Chromosome"/>
</dbReference>
<dbReference type="GO" id="GO:0003677">
    <property type="term" value="F:DNA binding"/>
    <property type="evidence" value="ECO:0007669"/>
    <property type="project" value="UniProtKB-UniRule"/>
</dbReference>
<dbReference type="GO" id="GO:0030337">
    <property type="term" value="F:DNA polymerase processivity factor activity"/>
    <property type="evidence" value="ECO:0000318"/>
    <property type="project" value="GO_Central"/>
</dbReference>
<dbReference type="GO" id="GO:0006272">
    <property type="term" value="P:leading strand elongation"/>
    <property type="evidence" value="ECO:0000318"/>
    <property type="project" value="GO_Central"/>
</dbReference>
<dbReference type="GO" id="GO:0006275">
    <property type="term" value="P:regulation of DNA replication"/>
    <property type="evidence" value="ECO:0007669"/>
    <property type="project" value="UniProtKB-UniRule"/>
</dbReference>
<dbReference type="CDD" id="cd00577">
    <property type="entry name" value="PCNA"/>
    <property type="match status" value="1"/>
</dbReference>
<dbReference type="Gene3D" id="3.70.10.10">
    <property type="match status" value="1"/>
</dbReference>
<dbReference type="HAMAP" id="MF_00317">
    <property type="entry name" value="DNApol_clamp_arch"/>
    <property type="match status" value="1"/>
</dbReference>
<dbReference type="InterPro" id="IPR046938">
    <property type="entry name" value="DNA_clamp_sf"/>
</dbReference>
<dbReference type="InterPro" id="IPR000730">
    <property type="entry name" value="Pr_cel_nuc_antig"/>
</dbReference>
<dbReference type="InterPro" id="IPR022648">
    <property type="entry name" value="Pr_cel_nuc_antig_N"/>
</dbReference>
<dbReference type="NCBIfam" id="NF002218">
    <property type="entry name" value="PRK01115.1-1"/>
    <property type="match status" value="1"/>
</dbReference>
<dbReference type="PANTHER" id="PTHR11352">
    <property type="entry name" value="PROLIFERATING CELL NUCLEAR ANTIGEN"/>
    <property type="match status" value="1"/>
</dbReference>
<dbReference type="PANTHER" id="PTHR11352:SF0">
    <property type="entry name" value="PROLIFERATING CELL NUCLEAR ANTIGEN"/>
    <property type="match status" value="1"/>
</dbReference>
<dbReference type="Pfam" id="PF00705">
    <property type="entry name" value="PCNA_N"/>
    <property type="match status" value="1"/>
</dbReference>
<dbReference type="SUPFAM" id="SSF55979">
    <property type="entry name" value="DNA clamp"/>
    <property type="match status" value="2"/>
</dbReference>
<organism>
    <name type="scientific">Saccharolobus solfataricus (strain ATCC 35092 / DSM 1617 / JCM 11322 / P2)</name>
    <name type="common">Sulfolobus solfataricus</name>
    <dbReference type="NCBI Taxonomy" id="273057"/>
    <lineage>
        <taxon>Archaea</taxon>
        <taxon>Thermoproteota</taxon>
        <taxon>Thermoprotei</taxon>
        <taxon>Sulfolobales</taxon>
        <taxon>Sulfolobaceae</taxon>
        <taxon>Saccharolobus</taxon>
    </lineage>
</organism>
<protein>
    <recommendedName>
        <fullName evidence="1">DNA polymerase sliding clamp 1</fullName>
    </recommendedName>
    <alternativeName>
        <fullName evidence="1">Proliferating cell nuclear antigen homolog 1</fullName>
        <shortName evidence="1">PCNA1</shortName>
    </alternativeName>
</protein>
<keyword id="KW-0002">3D-structure</keyword>
<keyword id="KW-0903">Direct protein sequencing</keyword>
<keyword id="KW-0235">DNA replication</keyword>
<keyword id="KW-0238">DNA-binding</keyword>
<keyword id="KW-1185">Reference proteome</keyword>
<proteinExistence type="evidence at protein level"/>
<name>PCNA1_SACS2</name>
<reference key="1">
    <citation type="journal article" date="1999" name="J. Mol. Biol.">
        <title>Two DNA polymerase sliding clamps from the thermophilic archaeon Sulfolobus solfataricus.</title>
        <authorList>
            <person name="De Felice M."/>
            <person name="Sensen C.W."/>
            <person name="Charlebois R.L."/>
            <person name="Rossi M."/>
            <person name="Pisani F.M."/>
        </authorList>
    </citation>
    <scope>NUCLEOTIDE SEQUENCE [GENOMIC DNA]</scope>
    <scope>PROTEIN SEQUENCE OF 1-10</scope>
    <scope>CHARACTERIZATION</scope>
    <source>
        <strain>ATCC 35092 / DSM 1617 / JCM 11322 / P2</strain>
    </source>
</reference>
<reference key="2">
    <citation type="journal article" date="2001" name="Proc. Natl. Acad. Sci. U.S.A.">
        <title>The complete genome of the crenarchaeon Sulfolobus solfataricus P2.</title>
        <authorList>
            <person name="She Q."/>
            <person name="Singh R.K."/>
            <person name="Confalonieri F."/>
            <person name="Zivanovic Y."/>
            <person name="Allard G."/>
            <person name="Awayez M.J."/>
            <person name="Chan-Weiher C.C.-Y."/>
            <person name="Clausen I.G."/>
            <person name="Curtis B.A."/>
            <person name="De Moors A."/>
            <person name="Erauso G."/>
            <person name="Fletcher C."/>
            <person name="Gordon P.M.K."/>
            <person name="Heikamp-de Jong I."/>
            <person name="Jeffries A.C."/>
            <person name="Kozera C.J."/>
            <person name="Medina N."/>
            <person name="Peng X."/>
            <person name="Thi-Ngoc H.P."/>
            <person name="Redder P."/>
            <person name="Schenk M.E."/>
            <person name="Theriault C."/>
            <person name="Tolstrup N."/>
            <person name="Charlebois R.L."/>
            <person name="Doolittle W.F."/>
            <person name="Duguet M."/>
            <person name="Gaasterland T."/>
            <person name="Garrett R.A."/>
            <person name="Ragan M.A."/>
            <person name="Sensen C.W."/>
            <person name="Van der Oost J."/>
        </authorList>
    </citation>
    <scope>NUCLEOTIDE SEQUENCE [LARGE SCALE GENOMIC DNA]</scope>
    <source>
        <strain>ATCC 35092 / DSM 1617 / JCM 11322 / P2</strain>
    </source>
</reference>
<reference key="3">
    <citation type="journal article" date="2003" name="Mol. Cell">
        <title>A heterotrimeric PCNA in the hyperthermophilic archaeon Sulfolobus solfataricus.</title>
        <authorList>
            <person name="Dionne I."/>
            <person name="Nookala R.K."/>
            <person name="Jackson S.P."/>
            <person name="Doherty A.J."/>
            <person name="Bell S.D."/>
        </authorList>
    </citation>
    <scope>FUNCTION</scope>
    <scope>INTERACTION WITH FEN AND PCNA2</scope>
    <scope>SUBUNIT</scope>
</reference>
<reference key="4">
    <citation type="journal article" date="2003" name="Mol. Microbiol.">
        <title>An archaeal XPF repair endonuclease dependent on a heterotrimeric PCNA.</title>
        <authorList>
            <person name="Roberts J.A."/>
            <person name="Bell S.D."/>
            <person name="White M.F."/>
        </authorList>
    </citation>
    <scope>INTERACTION WITH XPF</scope>
    <scope>SUBUNIT</scope>
    <source>
        <strain>ATCC 35092 / DSM 1617 / JCM 11322 / P2</strain>
    </source>
</reference>
<reference key="5">
    <citation type="journal article" date="2006" name="J. Mol. Biol.">
        <title>PCNA activates the Holliday junction endonuclease Hjc.</title>
        <authorList>
            <person name="Dorazi R."/>
            <person name="Parker J.L."/>
            <person name="White M.F."/>
        </authorList>
    </citation>
    <scope>FUNCTION</scope>
    <scope>INTERACTION WITH HJC</scope>
    <scope>SUBUNIT</scope>
</reference>
<reference key="6">
    <citation type="journal article" date="2006" name="Acta Crystallogr. F">
        <title>Structure of the heterotrimeric PCNA from Sulfolobus solfataricus.</title>
        <authorList>
            <person name="Williams G.J."/>
            <person name="Johnson K."/>
            <person name="Rudolf J."/>
            <person name="McMahon S.A."/>
            <person name="Carter L."/>
            <person name="Oke M."/>
            <person name="Liu H."/>
            <person name="Taylor G.L."/>
            <person name="White M.F."/>
            <person name="Naismith J.H."/>
        </authorList>
    </citation>
    <scope>X-RAY CRYSTALLOGRAPHY (2.20 ANGSTROMS)</scope>
    <scope>SUBUNIT</scope>
</reference>
<reference key="7">
    <citation type="journal article" date="2006" name="Mol. Cell">
        <title>A flexible interface between DNA ligase and PCNA supports conformational switching and efficient ligation of DNA.</title>
        <authorList>
            <person name="Pascal J.M."/>
            <person name="Tsodikov O.V."/>
            <person name="Hura G.L."/>
            <person name="Song W."/>
            <person name="Cotner E.A."/>
            <person name="Classen S."/>
            <person name="Tomkinson A.E."/>
            <person name="Tainer J.A."/>
            <person name="Ellenberger T."/>
        </authorList>
    </citation>
    <scope>X-RAY CRYSTALLOGRAPHY (2.79 ANGSTROMS)</scope>
    <scope>SUBUNIT</scope>
</reference>
<reference key="8">
    <citation type="journal article" date="2006" name="Nucleic Acids Res.">
        <title>Structure of an archaeal PCNA1-PCNA2-FEN1 complex: elucidating PCNA subunit and client enzyme specificity.</title>
        <authorList>
            <person name="Dore A.S."/>
            <person name="Kilkenny M.L."/>
            <person name="Jones S.A."/>
            <person name="Oliver A.W."/>
            <person name="Roe S.M."/>
            <person name="Bell S.D."/>
            <person name="Pearl L.H."/>
        </authorList>
    </citation>
    <scope>X-RAY CRYSTALLOGRAPHY (2.9 ANGSTROMS) IN COMPLEX WITH PCNA2 AND FEN</scope>
    <scope>SUBUNIT</scope>
    <scope>MUTAGENESIS OF 114-TYR--LYS-116 AND 175-LYS--TYR-177</scope>
</reference>
<reference key="9">
    <citation type="journal article" date="2008" name="Acta Crystallogr. D">
        <title>Structures of monomeric, dimeric and trimeric PCNA: PCNA-ring assembly and opening.</title>
        <authorList>
            <person name="Hlinkova V."/>
            <person name="Xing G."/>
            <person name="Bauer J."/>
            <person name="Shin Y.J."/>
            <person name="Dionne I."/>
            <person name="Rajashankar K.R."/>
            <person name="Bell S.D."/>
            <person name="Ling H."/>
        </authorList>
    </citation>
    <scope>X-RAY CRYSTALLOGRAPHY (2.5 ANGSTROMS) OF 3-249</scope>
    <scope>SUBUNIT</scope>
</reference>
<reference key="10">
    <citation type="journal article" date="2009" name="Mol. Microbiol.">
        <title>Structural insight into recruitment of translesion DNA polymerase Dpo4 to sliding clamp PCNA.</title>
        <authorList>
            <person name="Xing G."/>
            <person name="Kirouac K."/>
            <person name="Shin Y.J."/>
            <person name="Bell S.D."/>
            <person name="Ling H."/>
        </authorList>
    </citation>
    <scope>X-RAY CRYSTALLOGRAPHY (2.05 ANGSTROMS) OF 3-249 IN COMPLEX WITH DPO4</scope>
    <scope>INTERACTION WITH DPO4</scope>
    <scope>SUBUNIT</scope>
</reference>
<comment type="function">
    <text evidence="2 5">One of the sliding clamp subunits that acts as a moving platform for DNA processing. Responsible for tethering the catalytic subunit of DNA polymerase to DNA during high-speed replication. Heterotrimer stimulates the Holliday junction resolvase Hjc. DNA polymerase I, DNA ligase and the flap endonuclease may be constitutively associated with the PCNA heterotrimer forming a scanning complex able to couple DNA synthesis and Okazaki fragment maturation.</text>
</comment>
<comment type="subunit">
    <text evidence="2 3 4 5 6 7 8 9">Forms heterodimers with PCNA2, which then recruit PCNA3; does not form homotrimers (PubMed:12535540, PubMed:18703842). The heterodimers interact with RfcS homotetramers (PubMed:12535540). Heterotrimer which circularizes head-to-tail (head is at N-terminus, tail is at C-terminus) to form a toroid; DNA passes through its center. Replication factor C (RFC) is required to load the toroid on the DNA. Heterotrimer interacts, probably via this subunit, with flap endonuclease 1 (fen) (PubMed:12535540), Hjc (PubMed:17011573), Dpo4 (PubMed:19054331), and XPF (PubMed:12675797).</text>
</comment>
<comment type="similarity">
    <text evidence="1">Belongs to the PCNA family.</text>
</comment>